<comment type="similarity">
    <text evidence="1">Belongs to the bacterial ribosomal protein bL35 family.</text>
</comment>
<sequence length="65" mass="7315">MPKMKSKSGAAKRFRALGGGGFKRSHAFMRHILTKKSTKRKRQLRGMETVNASNHKAVARMLPYA</sequence>
<accession>Q3SK32</accession>
<protein>
    <recommendedName>
        <fullName evidence="1">Large ribosomal subunit protein bL35</fullName>
    </recommendedName>
    <alternativeName>
        <fullName evidence="2">50S ribosomal protein L35</fullName>
    </alternativeName>
</protein>
<feature type="chain" id="PRO_0000258778" description="Large ribosomal subunit protein bL35">
    <location>
        <begin position="1"/>
        <end position="65"/>
    </location>
</feature>
<dbReference type="EMBL" id="CP000116">
    <property type="protein sequence ID" value="AAZ96962.1"/>
    <property type="molecule type" value="Genomic_DNA"/>
</dbReference>
<dbReference type="RefSeq" id="WP_011311521.1">
    <property type="nucleotide sequence ID" value="NC_007404.1"/>
</dbReference>
<dbReference type="SMR" id="Q3SK32"/>
<dbReference type="STRING" id="292415.Tbd_1009"/>
<dbReference type="KEGG" id="tbd:Tbd_1009"/>
<dbReference type="eggNOG" id="COG0291">
    <property type="taxonomic scope" value="Bacteria"/>
</dbReference>
<dbReference type="HOGENOM" id="CLU_169643_1_1_4"/>
<dbReference type="OrthoDB" id="47476at2"/>
<dbReference type="Proteomes" id="UP000008291">
    <property type="component" value="Chromosome"/>
</dbReference>
<dbReference type="GO" id="GO:0022625">
    <property type="term" value="C:cytosolic large ribosomal subunit"/>
    <property type="evidence" value="ECO:0007669"/>
    <property type="project" value="TreeGrafter"/>
</dbReference>
<dbReference type="GO" id="GO:0003735">
    <property type="term" value="F:structural constituent of ribosome"/>
    <property type="evidence" value="ECO:0007669"/>
    <property type="project" value="InterPro"/>
</dbReference>
<dbReference type="GO" id="GO:0006412">
    <property type="term" value="P:translation"/>
    <property type="evidence" value="ECO:0007669"/>
    <property type="project" value="UniProtKB-UniRule"/>
</dbReference>
<dbReference type="FunFam" id="4.10.410.60:FF:000001">
    <property type="entry name" value="50S ribosomal protein L35"/>
    <property type="match status" value="1"/>
</dbReference>
<dbReference type="Gene3D" id="4.10.410.60">
    <property type="match status" value="1"/>
</dbReference>
<dbReference type="HAMAP" id="MF_00514">
    <property type="entry name" value="Ribosomal_bL35"/>
    <property type="match status" value="1"/>
</dbReference>
<dbReference type="InterPro" id="IPR001706">
    <property type="entry name" value="Ribosomal_bL35"/>
</dbReference>
<dbReference type="InterPro" id="IPR021137">
    <property type="entry name" value="Ribosomal_bL35-like"/>
</dbReference>
<dbReference type="InterPro" id="IPR018265">
    <property type="entry name" value="Ribosomal_bL35_CS"/>
</dbReference>
<dbReference type="InterPro" id="IPR037229">
    <property type="entry name" value="Ribosomal_bL35_sf"/>
</dbReference>
<dbReference type="NCBIfam" id="TIGR00001">
    <property type="entry name" value="rpmI_bact"/>
    <property type="match status" value="1"/>
</dbReference>
<dbReference type="PANTHER" id="PTHR33343">
    <property type="entry name" value="54S RIBOSOMAL PROTEIN BL35M"/>
    <property type="match status" value="1"/>
</dbReference>
<dbReference type="PANTHER" id="PTHR33343:SF1">
    <property type="entry name" value="LARGE RIBOSOMAL SUBUNIT PROTEIN BL35M"/>
    <property type="match status" value="1"/>
</dbReference>
<dbReference type="Pfam" id="PF01632">
    <property type="entry name" value="Ribosomal_L35p"/>
    <property type="match status" value="1"/>
</dbReference>
<dbReference type="PRINTS" id="PR00064">
    <property type="entry name" value="RIBOSOMALL35"/>
</dbReference>
<dbReference type="SUPFAM" id="SSF143034">
    <property type="entry name" value="L35p-like"/>
    <property type="match status" value="1"/>
</dbReference>
<dbReference type="PROSITE" id="PS00936">
    <property type="entry name" value="RIBOSOMAL_L35"/>
    <property type="match status" value="1"/>
</dbReference>
<proteinExistence type="inferred from homology"/>
<organism>
    <name type="scientific">Thiobacillus denitrificans (strain ATCC 25259 / T1)</name>
    <dbReference type="NCBI Taxonomy" id="292415"/>
    <lineage>
        <taxon>Bacteria</taxon>
        <taxon>Pseudomonadati</taxon>
        <taxon>Pseudomonadota</taxon>
        <taxon>Betaproteobacteria</taxon>
        <taxon>Nitrosomonadales</taxon>
        <taxon>Thiobacillaceae</taxon>
        <taxon>Thiobacillus</taxon>
    </lineage>
</organism>
<name>RL35_THIDA</name>
<keyword id="KW-1185">Reference proteome</keyword>
<keyword id="KW-0687">Ribonucleoprotein</keyword>
<keyword id="KW-0689">Ribosomal protein</keyword>
<evidence type="ECO:0000255" key="1">
    <source>
        <dbReference type="HAMAP-Rule" id="MF_00514"/>
    </source>
</evidence>
<evidence type="ECO:0000305" key="2"/>
<gene>
    <name evidence="1" type="primary">rpmI</name>
    <name type="ordered locus">Tbd_1009</name>
</gene>
<reference key="1">
    <citation type="journal article" date="2006" name="J. Bacteriol.">
        <title>The genome sequence of the obligately chemolithoautotrophic, facultatively anaerobic bacterium Thiobacillus denitrificans.</title>
        <authorList>
            <person name="Beller H.R."/>
            <person name="Chain P.S."/>
            <person name="Letain T.E."/>
            <person name="Chakicherla A."/>
            <person name="Larimer F.W."/>
            <person name="Richardson P.M."/>
            <person name="Coleman M.A."/>
            <person name="Wood A.P."/>
            <person name="Kelly D.P."/>
        </authorList>
    </citation>
    <scope>NUCLEOTIDE SEQUENCE [LARGE SCALE GENOMIC DNA]</scope>
    <source>
        <strain>ATCC 25259 / T1</strain>
    </source>
</reference>